<reference key="1">
    <citation type="submission" date="2006-08" db="EMBL/GenBank/DDBJ databases">
        <title>Complete sequence of Alkalilimnicola ehrilichei MLHE-1.</title>
        <authorList>
            <person name="Copeland A."/>
            <person name="Lucas S."/>
            <person name="Lapidus A."/>
            <person name="Barry K."/>
            <person name="Detter J.C."/>
            <person name="Glavina del Rio T."/>
            <person name="Hammon N."/>
            <person name="Israni S."/>
            <person name="Dalin E."/>
            <person name="Tice H."/>
            <person name="Pitluck S."/>
            <person name="Sims D."/>
            <person name="Brettin T."/>
            <person name="Bruce D."/>
            <person name="Han C."/>
            <person name="Tapia R."/>
            <person name="Gilna P."/>
            <person name="Schmutz J."/>
            <person name="Larimer F."/>
            <person name="Land M."/>
            <person name="Hauser L."/>
            <person name="Kyrpides N."/>
            <person name="Mikhailova N."/>
            <person name="Oremland R.S."/>
            <person name="Hoeft S.E."/>
            <person name="Switzer-Blum J."/>
            <person name="Kulp T."/>
            <person name="King G."/>
            <person name="Tabita R."/>
            <person name="Witte B."/>
            <person name="Santini J.M."/>
            <person name="Basu P."/>
            <person name="Hollibaugh J.T."/>
            <person name="Xie G."/>
            <person name="Stolz J.F."/>
            <person name="Richardson P."/>
        </authorList>
    </citation>
    <scope>NUCLEOTIDE SEQUENCE [LARGE SCALE GENOMIC DNA]</scope>
    <source>
        <strain>ATCC BAA-1101 / DSM 17681 / MLHE-1</strain>
    </source>
</reference>
<proteinExistence type="inferred from homology"/>
<organism>
    <name type="scientific">Alkalilimnicola ehrlichii (strain ATCC BAA-1101 / DSM 17681 / MLHE-1)</name>
    <dbReference type="NCBI Taxonomy" id="187272"/>
    <lineage>
        <taxon>Bacteria</taxon>
        <taxon>Pseudomonadati</taxon>
        <taxon>Pseudomonadota</taxon>
        <taxon>Gammaproteobacteria</taxon>
        <taxon>Chromatiales</taxon>
        <taxon>Ectothiorhodospiraceae</taxon>
        <taxon>Alkalilimnicola</taxon>
    </lineage>
</organism>
<comment type="similarity">
    <text evidence="1">Belongs to the bacterial ribosomal protein bL35 family.</text>
</comment>
<dbReference type="EMBL" id="CP000453">
    <property type="protein sequence ID" value="ABI56120.1"/>
    <property type="molecule type" value="Genomic_DNA"/>
</dbReference>
<dbReference type="RefSeq" id="WP_011628515.1">
    <property type="nucleotide sequence ID" value="NC_008340.1"/>
</dbReference>
<dbReference type="SMR" id="Q0AAL7"/>
<dbReference type="KEGG" id="aeh:Mlg_0766"/>
<dbReference type="eggNOG" id="COG0291">
    <property type="taxonomic scope" value="Bacteria"/>
</dbReference>
<dbReference type="HOGENOM" id="CLU_169643_4_3_6"/>
<dbReference type="OrthoDB" id="47476at2"/>
<dbReference type="Proteomes" id="UP000001962">
    <property type="component" value="Chromosome"/>
</dbReference>
<dbReference type="GO" id="GO:0022625">
    <property type="term" value="C:cytosolic large ribosomal subunit"/>
    <property type="evidence" value="ECO:0007669"/>
    <property type="project" value="TreeGrafter"/>
</dbReference>
<dbReference type="GO" id="GO:0003735">
    <property type="term" value="F:structural constituent of ribosome"/>
    <property type="evidence" value="ECO:0007669"/>
    <property type="project" value="InterPro"/>
</dbReference>
<dbReference type="GO" id="GO:0006412">
    <property type="term" value="P:translation"/>
    <property type="evidence" value="ECO:0007669"/>
    <property type="project" value="UniProtKB-UniRule"/>
</dbReference>
<dbReference type="FunFam" id="4.10.410.60:FF:000001">
    <property type="entry name" value="50S ribosomal protein L35"/>
    <property type="match status" value="1"/>
</dbReference>
<dbReference type="Gene3D" id="4.10.410.60">
    <property type="match status" value="1"/>
</dbReference>
<dbReference type="HAMAP" id="MF_00514">
    <property type="entry name" value="Ribosomal_bL35"/>
    <property type="match status" value="1"/>
</dbReference>
<dbReference type="InterPro" id="IPR001706">
    <property type="entry name" value="Ribosomal_bL35"/>
</dbReference>
<dbReference type="InterPro" id="IPR021137">
    <property type="entry name" value="Ribosomal_bL35-like"/>
</dbReference>
<dbReference type="InterPro" id="IPR018265">
    <property type="entry name" value="Ribosomal_bL35_CS"/>
</dbReference>
<dbReference type="InterPro" id="IPR037229">
    <property type="entry name" value="Ribosomal_bL35_sf"/>
</dbReference>
<dbReference type="NCBIfam" id="TIGR00001">
    <property type="entry name" value="rpmI_bact"/>
    <property type="match status" value="1"/>
</dbReference>
<dbReference type="PANTHER" id="PTHR33343">
    <property type="entry name" value="54S RIBOSOMAL PROTEIN BL35M"/>
    <property type="match status" value="1"/>
</dbReference>
<dbReference type="PANTHER" id="PTHR33343:SF1">
    <property type="entry name" value="LARGE RIBOSOMAL SUBUNIT PROTEIN BL35M"/>
    <property type="match status" value="1"/>
</dbReference>
<dbReference type="Pfam" id="PF01632">
    <property type="entry name" value="Ribosomal_L35p"/>
    <property type="match status" value="1"/>
</dbReference>
<dbReference type="PRINTS" id="PR00064">
    <property type="entry name" value="RIBOSOMALL35"/>
</dbReference>
<dbReference type="SUPFAM" id="SSF143034">
    <property type="entry name" value="L35p-like"/>
    <property type="match status" value="1"/>
</dbReference>
<dbReference type="PROSITE" id="PS00936">
    <property type="entry name" value="RIBOSOMAL_L35"/>
    <property type="match status" value="1"/>
</dbReference>
<name>RL35_ALKEH</name>
<sequence length="65" mass="7525">MPKIKTNRGAAKRFKATASGRYKRAHAFHNHILTKKDSKRKRKLRADALVAEADTPMIRRMMPYS</sequence>
<keyword id="KW-1185">Reference proteome</keyword>
<keyword id="KW-0687">Ribonucleoprotein</keyword>
<keyword id="KW-0689">Ribosomal protein</keyword>
<protein>
    <recommendedName>
        <fullName evidence="1">Large ribosomal subunit protein bL35</fullName>
    </recommendedName>
    <alternativeName>
        <fullName evidence="2">50S ribosomal protein L35</fullName>
    </alternativeName>
</protein>
<feature type="chain" id="PRO_1000050652" description="Large ribosomal subunit protein bL35">
    <location>
        <begin position="1"/>
        <end position="65"/>
    </location>
</feature>
<accession>Q0AAL7</accession>
<gene>
    <name evidence="1" type="primary">rpmI</name>
    <name type="ordered locus">Mlg_0766</name>
</gene>
<evidence type="ECO:0000255" key="1">
    <source>
        <dbReference type="HAMAP-Rule" id="MF_00514"/>
    </source>
</evidence>
<evidence type="ECO:0000305" key="2"/>